<dbReference type="EC" id="2.7.8.28" evidence="1"/>
<dbReference type="EMBL" id="AL939114">
    <property type="protein sequence ID" value="CAB88920.1"/>
    <property type="molecule type" value="Genomic_DNA"/>
</dbReference>
<dbReference type="RefSeq" id="NP_627258.1">
    <property type="nucleotide sequence ID" value="NC_003888.3"/>
</dbReference>
<dbReference type="SMR" id="Q9KZK9"/>
<dbReference type="FunCoup" id="Q9KZK9">
    <property type="interactions" value="115"/>
</dbReference>
<dbReference type="STRING" id="100226.gene:17760651"/>
<dbReference type="PaxDb" id="100226-SCO3036"/>
<dbReference type="KEGG" id="sco:SCO3036"/>
<dbReference type="PATRIC" id="fig|100226.15.peg.3096"/>
<dbReference type="eggNOG" id="COG0391">
    <property type="taxonomic scope" value="Bacteria"/>
</dbReference>
<dbReference type="HOGENOM" id="CLU_055795_0_0_11"/>
<dbReference type="InParanoid" id="Q9KZK9"/>
<dbReference type="OrthoDB" id="7466225at2"/>
<dbReference type="PhylomeDB" id="Q9KZK9"/>
<dbReference type="UniPathway" id="UPA00071"/>
<dbReference type="Proteomes" id="UP000001973">
    <property type="component" value="Chromosome"/>
</dbReference>
<dbReference type="GO" id="GO:0043743">
    <property type="term" value="F:LPPG:FO 2-phospho-L-lactate transferase activity"/>
    <property type="evidence" value="ECO:0000318"/>
    <property type="project" value="GO_Central"/>
</dbReference>
<dbReference type="GO" id="GO:0000287">
    <property type="term" value="F:magnesium ion binding"/>
    <property type="evidence" value="ECO:0007669"/>
    <property type="project" value="InterPro"/>
</dbReference>
<dbReference type="GO" id="GO:0052645">
    <property type="term" value="P:F420-0 metabolic process"/>
    <property type="evidence" value="ECO:0007669"/>
    <property type="project" value="UniProtKB-UniRule"/>
</dbReference>
<dbReference type="CDD" id="cd07186">
    <property type="entry name" value="CofD_like"/>
    <property type="match status" value="1"/>
</dbReference>
<dbReference type="FunFam" id="1.10.8.240:FF:000001">
    <property type="entry name" value="2-phospho-L-lactate transferase"/>
    <property type="match status" value="1"/>
</dbReference>
<dbReference type="FunFam" id="3.40.50.10680:FF:000001">
    <property type="entry name" value="2-phospho-L-lactate transferase"/>
    <property type="match status" value="1"/>
</dbReference>
<dbReference type="Gene3D" id="1.10.8.240">
    <property type="entry name" value="CofD-like domain"/>
    <property type="match status" value="1"/>
</dbReference>
<dbReference type="Gene3D" id="3.40.50.10680">
    <property type="entry name" value="CofD-like domains"/>
    <property type="match status" value="1"/>
</dbReference>
<dbReference type="HAMAP" id="MF_01257">
    <property type="entry name" value="CofD"/>
    <property type="match status" value="1"/>
</dbReference>
<dbReference type="InterPro" id="IPR002882">
    <property type="entry name" value="CofD"/>
</dbReference>
<dbReference type="InterPro" id="IPR038136">
    <property type="entry name" value="CofD-like_dom_sf"/>
</dbReference>
<dbReference type="InterPro" id="IPR010115">
    <property type="entry name" value="FbiA/CofD"/>
</dbReference>
<dbReference type="NCBIfam" id="TIGR01819">
    <property type="entry name" value="F420_cofD"/>
    <property type="match status" value="1"/>
</dbReference>
<dbReference type="PANTHER" id="PTHR43007">
    <property type="entry name" value="2-PHOSPHO-L-LACTATE TRANSFERASE"/>
    <property type="match status" value="1"/>
</dbReference>
<dbReference type="PANTHER" id="PTHR43007:SF1">
    <property type="entry name" value="2-PHOSPHO-L-LACTATE TRANSFERASE"/>
    <property type="match status" value="1"/>
</dbReference>
<dbReference type="Pfam" id="PF01933">
    <property type="entry name" value="CofD"/>
    <property type="match status" value="1"/>
</dbReference>
<dbReference type="SUPFAM" id="SSF142338">
    <property type="entry name" value="CofD-like"/>
    <property type="match status" value="1"/>
</dbReference>
<organism>
    <name type="scientific">Streptomyces coelicolor (strain ATCC BAA-471 / A3(2) / M145)</name>
    <dbReference type="NCBI Taxonomy" id="100226"/>
    <lineage>
        <taxon>Bacteria</taxon>
        <taxon>Bacillati</taxon>
        <taxon>Actinomycetota</taxon>
        <taxon>Actinomycetes</taxon>
        <taxon>Kitasatosporales</taxon>
        <taxon>Streptomycetaceae</taxon>
        <taxon>Streptomyces</taxon>
        <taxon>Streptomyces albidoflavus group</taxon>
    </lineage>
</organism>
<feature type="chain" id="PRO_0000145767" description="Phosphoenolpyruvate transferase">
    <location>
        <begin position="1"/>
        <end position="319"/>
    </location>
</feature>
<feature type="binding site" evidence="1">
    <location>
        <position position="50"/>
    </location>
    <ligand>
        <name>7,8-didemethyl-8-hydroxy-5-deazariboflavin</name>
        <dbReference type="ChEBI" id="CHEBI:59904"/>
    </ligand>
</feature>
<accession>Q9KZK9</accession>
<keyword id="KW-0460">Magnesium</keyword>
<keyword id="KW-1185">Reference proteome</keyword>
<keyword id="KW-0808">Transferase</keyword>
<sequence length="319" mass="33614">MRIVVLAGGIGGARFLRGLRQAAPDADITVIGNTGDDIHLFGLKVCPDLDTVMYTLGGGINEEQGWGRADETFHLKEELAAYGVGPEWFGLGDRDFATHIVRTQMITAGFPLSAVTEALCDRWKPGVRLIPMTDDRVETHVAVELDGERKAVHFQEYWVRLRASVPAEAVVPVGAEQAKPAPGVLEAIGEADVILFPPSNPVVSIGTILAVPGIREAIADAGVPVVGLSPIVGDAPVRGMADKVLAAVGVESTAAAVAEHYGSGLLDGWLVDTVDADAVTRVRAAGVLCRAVPLMMTDLDATAQMAREALTLAEEVREA</sequence>
<protein>
    <recommendedName>
        <fullName evidence="1">Phosphoenolpyruvate transferase</fullName>
        <ecNumber evidence="1">2.7.8.28</ecNumber>
    </recommendedName>
    <alternativeName>
        <fullName evidence="1">EPPG:FO PEP transferase</fullName>
    </alternativeName>
</protein>
<proteinExistence type="inferred from homology"/>
<name>FBIA_STRCO</name>
<evidence type="ECO:0000255" key="1">
    <source>
        <dbReference type="HAMAP-Rule" id="MF_01257"/>
    </source>
</evidence>
<reference key="1">
    <citation type="journal article" date="2002" name="Nature">
        <title>Complete genome sequence of the model actinomycete Streptomyces coelicolor A3(2).</title>
        <authorList>
            <person name="Bentley S.D."/>
            <person name="Chater K.F."/>
            <person name="Cerdeno-Tarraga A.-M."/>
            <person name="Challis G.L."/>
            <person name="Thomson N.R."/>
            <person name="James K.D."/>
            <person name="Harris D.E."/>
            <person name="Quail M.A."/>
            <person name="Kieser H."/>
            <person name="Harper D."/>
            <person name="Bateman A."/>
            <person name="Brown S."/>
            <person name="Chandra G."/>
            <person name="Chen C.W."/>
            <person name="Collins M."/>
            <person name="Cronin A."/>
            <person name="Fraser A."/>
            <person name="Goble A."/>
            <person name="Hidalgo J."/>
            <person name="Hornsby T."/>
            <person name="Howarth S."/>
            <person name="Huang C.-H."/>
            <person name="Kieser T."/>
            <person name="Larke L."/>
            <person name="Murphy L.D."/>
            <person name="Oliver K."/>
            <person name="O'Neil S."/>
            <person name="Rabbinowitsch E."/>
            <person name="Rajandream M.A."/>
            <person name="Rutherford K.M."/>
            <person name="Rutter S."/>
            <person name="Seeger K."/>
            <person name="Saunders D."/>
            <person name="Sharp S."/>
            <person name="Squares R."/>
            <person name="Squares S."/>
            <person name="Taylor K."/>
            <person name="Warren T."/>
            <person name="Wietzorrek A."/>
            <person name="Woodward J.R."/>
            <person name="Barrell B.G."/>
            <person name="Parkhill J."/>
            <person name="Hopwood D.A."/>
        </authorList>
    </citation>
    <scope>NUCLEOTIDE SEQUENCE [LARGE SCALE GENOMIC DNA]</scope>
    <source>
        <strain>ATCC BAA-471 / A3(2) / M145</strain>
    </source>
</reference>
<comment type="function">
    <text evidence="1">Catalyzes the transfer of the phosphoenolpyruvate moiety from enoylpyruvoyl-2-diphospho-5'-guanosine (EPPG) to 7,8-didemethyl-8-hydroxy-5-deazariboflavin (FO) with the formation of dehydro coenzyme F420-0 and GMP.</text>
</comment>
<comment type="catalytic activity">
    <reaction evidence="1">
        <text>enolpyruvoyl-2-diphospho-5'-guanosine + 7,8-didemethyl-8-hydroxy-5-deazariboflavin = dehydro coenzyme F420-0 + GMP + H(+)</text>
        <dbReference type="Rhea" id="RHEA:27510"/>
        <dbReference type="ChEBI" id="CHEBI:15378"/>
        <dbReference type="ChEBI" id="CHEBI:58115"/>
        <dbReference type="ChEBI" id="CHEBI:59904"/>
        <dbReference type="ChEBI" id="CHEBI:143701"/>
        <dbReference type="ChEBI" id="CHEBI:143705"/>
        <dbReference type="EC" id="2.7.8.28"/>
    </reaction>
</comment>
<comment type="cofactor">
    <cofactor evidence="1">
        <name>Mg(2+)</name>
        <dbReference type="ChEBI" id="CHEBI:18420"/>
    </cofactor>
</comment>
<comment type="pathway">
    <text evidence="1">Cofactor biosynthesis; coenzyme F420 biosynthesis.</text>
</comment>
<comment type="subunit">
    <text evidence="1">Homodimer.</text>
</comment>
<comment type="similarity">
    <text evidence="1">Belongs to the CofD family.</text>
</comment>
<gene>
    <name evidence="1" type="primary">fbiA</name>
    <name type="ordered locus">SCO3036</name>
    <name type="ORF">SCE34.17</name>
</gene>